<dbReference type="EMBL" id="CP000142">
    <property type="protein sequence ID" value="ABA90006.1"/>
    <property type="molecule type" value="Genomic_DNA"/>
</dbReference>
<dbReference type="RefSeq" id="WP_011342551.1">
    <property type="nucleotide sequence ID" value="NC_007498.2"/>
</dbReference>
<dbReference type="SMR" id="Q3A0V1"/>
<dbReference type="STRING" id="338963.Pcar_2771"/>
<dbReference type="KEGG" id="pca:Pcar_2771"/>
<dbReference type="eggNOG" id="COG0234">
    <property type="taxonomic scope" value="Bacteria"/>
</dbReference>
<dbReference type="HOGENOM" id="CLU_132825_2_0_7"/>
<dbReference type="OrthoDB" id="9806791at2"/>
<dbReference type="Proteomes" id="UP000002534">
    <property type="component" value="Chromosome"/>
</dbReference>
<dbReference type="GO" id="GO:0005737">
    <property type="term" value="C:cytoplasm"/>
    <property type="evidence" value="ECO:0007669"/>
    <property type="project" value="UniProtKB-SubCell"/>
</dbReference>
<dbReference type="GO" id="GO:0005524">
    <property type="term" value="F:ATP binding"/>
    <property type="evidence" value="ECO:0007669"/>
    <property type="project" value="InterPro"/>
</dbReference>
<dbReference type="GO" id="GO:0046872">
    <property type="term" value="F:metal ion binding"/>
    <property type="evidence" value="ECO:0007669"/>
    <property type="project" value="TreeGrafter"/>
</dbReference>
<dbReference type="GO" id="GO:0044183">
    <property type="term" value="F:protein folding chaperone"/>
    <property type="evidence" value="ECO:0007669"/>
    <property type="project" value="InterPro"/>
</dbReference>
<dbReference type="GO" id="GO:0051087">
    <property type="term" value="F:protein-folding chaperone binding"/>
    <property type="evidence" value="ECO:0007669"/>
    <property type="project" value="TreeGrafter"/>
</dbReference>
<dbReference type="GO" id="GO:0051082">
    <property type="term" value="F:unfolded protein binding"/>
    <property type="evidence" value="ECO:0007669"/>
    <property type="project" value="TreeGrafter"/>
</dbReference>
<dbReference type="GO" id="GO:0051085">
    <property type="term" value="P:chaperone cofactor-dependent protein refolding"/>
    <property type="evidence" value="ECO:0007669"/>
    <property type="project" value="TreeGrafter"/>
</dbReference>
<dbReference type="CDD" id="cd00320">
    <property type="entry name" value="cpn10"/>
    <property type="match status" value="1"/>
</dbReference>
<dbReference type="FunFam" id="2.30.33.40:FF:000001">
    <property type="entry name" value="10 kDa chaperonin"/>
    <property type="match status" value="1"/>
</dbReference>
<dbReference type="Gene3D" id="2.30.33.40">
    <property type="entry name" value="GroES chaperonin"/>
    <property type="match status" value="1"/>
</dbReference>
<dbReference type="HAMAP" id="MF_00580">
    <property type="entry name" value="CH10"/>
    <property type="match status" value="1"/>
</dbReference>
<dbReference type="InterPro" id="IPR020818">
    <property type="entry name" value="Chaperonin_GroES"/>
</dbReference>
<dbReference type="InterPro" id="IPR037124">
    <property type="entry name" value="Chaperonin_GroES_sf"/>
</dbReference>
<dbReference type="InterPro" id="IPR018369">
    <property type="entry name" value="Chaprnonin_Cpn10_CS"/>
</dbReference>
<dbReference type="InterPro" id="IPR011032">
    <property type="entry name" value="GroES-like_sf"/>
</dbReference>
<dbReference type="NCBIfam" id="NF001527">
    <property type="entry name" value="PRK00364.1-2"/>
    <property type="match status" value="1"/>
</dbReference>
<dbReference type="NCBIfam" id="NF001531">
    <property type="entry name" value="PRK00364.2-2"/>
    <property type="match status" value="1"/>
</dbReference>
<dbReference type="NCBIfam" id="NF001533">
    <property type="entry name" value="PRK00364.2-4"/>
    <property type="match status" value="1"/>
</dbReference>
<dbReference type="NCBIfam" id="NF001534">
    <property type="entry name" value="PRK00364.2-5"/>
    <property type="match status" value="1"/>
</dbReference>
<dbReference type="PANTHER" id="PTHR10772">
    <property type="entry name" value="10 KDA HEAT SHOCK PROTEIN"/>
    <property type="match status" value="1"/>
</dbReference>
<dbReference type="PANTHER" id="PTHR10772:SF58">
    <property type="entry name" value="CO-CHAPERONIN GROES"/>
    <property type="match status" value="1"/>
</dbReference>
<dbReference type="Pfam" id="PF00166">
    <property type="entry name" value="Cpn10"/>
    <property type="match status" value="1"/>
</dbReference>
<dbReference type="PRINTS" id="PR00297">
    <property type="entry name" value="CHAPERONIN10"/>
</dbReference>
<dbReference type="SMART" id="SM00883">
    <property type="entry name" value="Cpn10"/>
    <property type="match status" value="1"/>
</dbReference>
<dbReference type="SUPFAM" id="SSF50129">
    <property type="entry name" value="GroES-like"/>
    <property type="match status" value="1"/>
</dbReference>
<dbReference type="PROSITE" id="PS00681">
    <property type="entry name" value="CHAPERONINS_CPN10"/>
    <property type="match status" value="1"/>
</dbReference>
<keyword id="KW-0143">Chaperone</keyword>
<keyword id="KW-0963">Cytoplasm</keyword>
<keyword id="KW-1185">Reference proteome</keyword>
<organism>
    <name type="scientific">Syntrophotalea carbinolica (strain DSM 2380 / NBRC 103641 / GraBd1)</name>
    <name type="common">Pelobacter carbinolicus</name>
    <dbReference type="NCBI Taxonomy" id="338963"/>
    <lineage>
        <taxon>Bacteria</taxon>
        <taxon>Pseudomonadati</taxon>
        <taxon>Thermodesulfobacteriota</taxon>
        <taxon>Desulfuromonadia</taxon>
        <taxon>Desulfuromonadales</taxon>
        <taxon>Syntrophotaleaceae</taxon>
        <taxon>Syntrophotalea</taxon>
    </lineage>
</organism>
<gene>
    <name evidence="1" type="primary">groES</name>
    <name evidence="1" type="synonym">groS</name>
    <name type="ordered locus">Pcar_2771</name>
</gene>
<evidence type="ECO:0000255" key="1">
    <source>
        <dbReference type="HAMAP-Rule" id="MF_00580"/>
    </source>
</evidence>
<protein>
    <recommendedName>
        <fullName evidence="1">Co-chaperonin GroES</fullName>
    </recommendedName>
    <alternativeName>
        <fullName evidence="1">10 kDa chaperonin</fullName>
    </alternativeName>
    <alternativeName>
        <fullName evidence="1">Chaperonin-10</fullName>
        <shortName evidence="1">Cpn10</shortName>
    </alternativeName>
</protein>
<reference key="1">
    <citation type="submission" date="2005-10" db="EMBL/GenBank/DDBJ databases">
        <title>Complete sequence of Pelobacter carbinolicus DSM 2380.</title>
        <authorList>
            <person name="Copeland A."/>
            <person name="Lucas S."/>
            <person name="Lapidus A."/>
            <person name="Barry K."/>
            <person name="Detter J.C."/>
            <person name="Glavina T."/>
            <person name="Hammon N."/>
            <person name="Israni S."/>
            <person name="Pitluck S."/>
            <person name="Chertkov O."/>
            <person name="Schmutz J."/>
            <person name="Larimer F."/>
            <person name="Land M."/>
            <person name="Kyrpides N."/>
            <person name="Ivanova N."/>
            <person name="Richardson P."/>
        </authorList>
    </citation>
    <scope>NUCLEOTIDE SEQUENCE [LARGE SCALE GENOMIC DNA]</scope>
    <source>
        <strain>DSM 2380 / NBRC 103641 / GraBd1</strain>
    </source>
</reference>
<feature type="chain" id="PRO_1000025318" description="Co-chaperonin GroES">
    <location>
        <begin position="1"/>
        <end position="95"/>
    </location>
</feature>
<name>CH10_SYNC1</name>
<accession>Q3A0V1</accession>
<comment type="function">
    <text evidence="1">Together with the chaperonin GroEL, plays an essential role in assisting protein folding. The GroEL-GroES system forms a nano-cage that allows encapsulation of the non-native substrate proteins and provides a physical environment optimized to promote and accelerate protein folding. GroES binds to the apical surface of the GroEL ring, thereby capping the opening of the GroEL channel.</text>
</comment>
<comment type="subunit">
    <text evidence="1">Heptamer of 7 subunits arranged in a ring. Interacts with the chaperonin GroEL.</text>
</comment>
<comment type="subcellular location">
    <subcellularLocation>
        <location evidence="1">Cytoplasm</location>
    </subcellularLocation>
</comment>
<comment type="similarity">
    <text evidence="1">Belongs to the GroES chaperonin family.</text>
</comment>
<proteinExistence type="inferred from homology"/>
<sequence>MNIRPLRDRIIVERIEEETTTAGGLIIPDSAKEKPQQGIVKAVGKGKVLEDGTVLPMDIKVGDRVLFGKYAGSEIKIDGLEYQIMREDDILGVLE</sequence>